<reference key="1">
    <citation type="journal article" date="2010" name="J. Bacteriol.">
        <title>Genome sequence of the Fleming strain of Micrococcus luteus, a simple free-living actinobacterium.</title>
        <authorList>
            <person name="Young M."/>
            <person name="Artsatbanov V."/>
            <person name="Beller H.R."/>
            <person name="Chandra G."/>
            <person name="Chater K.F."/>
            <person name="Dover L.G."/>
            <person name="Goh E.B."/>
            <person name="Kahan T."/>
            <person name="Kaprelyants A.S."/>
            <person name="Kyrpides N."/>
            <person name="Lapidus A."/>
            <person name="Lowry S.R."/>
            <person name="Lykidis A."/>
            <person name="Mahillon J."/>
            <person name="Markowitz V."/>
            <person name="Mavromatis K."/>
            <person name="Mukamolova G.V."/>
            <person name="Oren A."/>
            <person name="Rokem J.S."/>
            <person name="Smith M.C."/>
            <person name="Young D.I."/>
            <person name="Greenblatt C.L."/>
        </authorList>
    </citation>
    <scope>NUCLEOTIDE SEQUENCE [LARGE SCALE GENOMIC DNA]</scope>
    <source>
        <strain>ATCC 4698 / DSM 20030 / JCM 1464 / CCM 169 / CCUG 5858 / IAM 1056 / NBRC 3333 / NCIMB 9278 / NCTC 2665 / VKM Ac-2230</strain>
    </source>
</reference>
<gene>
    <name evidence="1" type="primary">dtd</name>
    <name type="ordered locus">Mlut_12780</name>
</gene>
<evidence type="ECO:0000255" key="1">
    <source>
        <dbReference type="HAMAP-Rule" id="MF_00518"/>
    </source>
</evidence>
<name>DTD_MICLC</name>
<comment type="function">
    <text evidence="1">An aminoacyl-tRNA editing enzyme that deacylates mischarged D-aminoacyl-tRNAs. Also deacylates mischarged glycyl-tRNA(Ala), protecting cells against glycine mischarging by AlaRS. Acts via tRNA-based rather than protein-based catalysis; rejects L-amino acids rather than detecting D-amino acids in the active site. By recycling D-aminoacyl-tRNA to D-amino acids and free tRNA molecules, this enzyme counteracts the toxicity associated with the formation of D-aminoacyl-tRNA entities in vivo and helps enforce protein L-homochirality.</text>
</comment>
<comment type="catalytic activity">
    <reaction evidence="1">
        <text>glycyl-tRNA(Ala) + H2O = tRNA(Ala) + glycine + H(+)</text>
        <dbReference type="Rhea" id="RHEA:53744"/>
        <dbReference type="Rhea" id="RHEA-COMP:9657"/>
        <dbReference type="Rhea" id="RHEA-COMP:13640"/>
        <dbReference type="ChEBI" id="CHEBI:15377"/>
        <dbReference type="ChEBI" id="CHEBI:15378"/>
        <dbReference type="ChEBI" id="CHEBI:57305"/>
        <dbReference type="ChEBI" id="CHEBI:78442"/>
        <dbReference type="ChEBI" id="CHEBI:78522"/>
        <dbReference type="EC" id="3.1.1.96"/>
    </reaction>
</comment>
<comment type="catalytic activity">
    <reaction evidence="1">
        <text>a D-aminoacyl-tRNA + H2O = a tRNA + a D-alpha-amino acid + H(+)</text>
        <dbReference type="Rhea" id="RHEA:13953"/>
        <dbReference type="Rhea" id="RHEA-COMP:10123"/>
        <dbReference type="Rhea" id="RHEA-COMP:10124"/>
        <dbReference type="ChEBI" id="CHEBI:15377"/>
        <dbReference type="ChEBI" id="CHEBI:15378"/>
        <dbReference type="ChEBI" id="CHEBI:59871"/>
        <dbReference type="ChEBI" id="CHEBI:78442"/>
        <dbReference type="ChEBI" id="CHEBI:79333"/>
        <dbReference type="EC" id="3.1.1.96"/>
    </reaction>
</comment>
<comment type="subunit">
    <text evidence="1">Homodimer.</text>
</comment>
<comment type="subcellular location">
    <subcellularLocation>
        <location evidence="1">Cytoplasm</location>
    </subcellularLocation>
</comment>
<comment type="domain">
    <text evidence="1">A Gly-cisPro motif from one monomer fits into the active site of the other monomer to allow specific chiral rejection of L-amino acids.</text>
</comment>
<comment type="similarity">
    <text evidence="1">Belongs to the DTD family.</text>
</comment>
<keyword id="KW-0963">Cytoplasm</keyword>
<keyword id="KW-0378">Hydrolase</keyword>
<keyword id="KW-1185">Reference proteome</keyword>
<keyword id="KW-0694">RNA-binding</keyword>
<keyword id="KW-0820">tRNA-binding</keyword>
<feature type="chain" id="PRO_1000211734" description="D-aminoacyl-tRNA deacylase">
    <location>
        <begin position="1"/>
        <end position="150"/>
    </location>
</feature>
<feature type="short sequence motif" description="Gly-cisPro motif, important for rejection of L-amino acids" evidence="1">
    <location>
        <begin position="133"/>
        <end position="134"/>
    </location>
</feature>
<dbReference type="EC" id="3.1.1.96" evidence="1"/>
<dbReference type="EMBL" id="CP001628">
    <property type="protein sequence ID" value="ACS30783.1"/>
    <property type="molecule type" value="Genomic_DNA"/>
</dbReference>
<dbReference type="RefSeq" id="WP_010078582.1">
    <property type="nucleotide sequence ID" value="NC_012803.1"/>
</dbReference>
<dbReference type="SMR" id="C5CCH1"/>
<dbReference type="STRING" id="465515.Mlut_12780"/>
<dbReference type="EnsemblBacteria" id="ACS30783">
    <property type="protein sequence ID" value="ACS30783"/>
    <property type="gene ID" value="Mlut_12780"/>
</dbReference>
<dbReference type="GeneID" id="93345433"/>
<dbReference type="KEGG" id="mlu:Mlut_12780"/>
<dbReference type="PATRIC" id="fig|465515.4.peg.1219"/>
<dbReference type="eggNOG" id="COG1490">
    <property type="taxonomic scope" value="Bacteria"/>
</dbReference>
<dbReference type="HOGENOM" id="CLU_076901_1_2_11"/>
<dbReference type="Proteomes" id="UP000000738">
    <property type="component" value="Chromosome"/>
</dbReference>
<dbReference type="GO" id="GO:0005737">
    <property type="term" value="C:cytoplasm"/>
    <property type="evidence" value="ECO:0007669"/>
    <property type="project" value="UniProtKB-SubCell"/>
</dbReference>
<dbReference type="GO" id="GO:0051500">
    <property type="term" value="F:D-tyrosyl-tRNA(Tyr) deacylase activity"/>
    <property type="evidence" value="ECO:0007669"/>
    <property type="project" value="TreeGrafter"/>
</dbReference>
<dbReference type="GO" id="GO:0106026">
    <property type="term" value="F:Gly-tRNA(Ala) deacylase activity"/>
    <property type="evidence" value="ECO:0007669"/>
    <property type="project" value="UniProtKB-UniRule"/>
</dbReference>
<dbReference type="GO" id="GO:0043908">
    <property type="term" value="F:Ser(Gly)-tRNA(Ala) hydrolase activity"/>
    <property type="evidence" value="ECO:0007669"/>
    <property type="project" value="UniProtKB-UniRule"/>
</dbReference>
<dbReference type="GO" id="GO:0000049">
    <property type="term" value="F:tRNA binding"/>
    <property type="evidence" value="ECO:0007669"/>
    <property type="project" value="UniProtKB-UniRule"/>
</dbReference>
<dbReference type="GO" id="GO:0019478">
    <property type="term" value="P:D-amino acid catabolic process"/>
    <property type="evidence" value="ECO:0007669"/>
    <property type="project" value="UniProtKB-UniRule"/>
</dbReference>
<dbReference type="FunFam" id="3.50.80.10:FF:000001">
    <property type="entry name" value="D-aminoacyl-tRNA deacylase"/>
    <property type="match status" value="1"/>
</dbReference>
<dbReference type="Gene3D" id="3.50.80.10">
    <property type="entry name" value="D-tyrosyl-tRNA(Tyr) deacylase"/>
    <property type="match status" value="1"/>
</dbReference>
<dbReference type="HAMAP" id="MF_00518">
    <property type="entry name" value="Deacylase_Dtd"/>
    <property type="match status" value="1"/>
</dbReference>
<dbReference type="InterPro" id="IPR003732">
    <property type="entry name" value="Daa-tRNA_deacyls_DTD"/>
</dbReference>
<dbReference type="InterPro" id="IPR023509">
    <property type="entry name" value="DTD-like_sf"/>
</dbReference>
<dbReference type="NCBIfam" id="TIGR00256">
    <property type="entry name" value="D-aminoacyl-tRNA deacylase"/>
    <property type="match status" value="1"/>
</dbReference>
<dbReference type="PANTHER" id="PTHR10472:SF5">
    <property type="entry name" value="D-AMINOACYL-TRNA DEACYLASE 1"/>
    <property type="match status" value="1"/>
</dbReference>
<dbReference type="PANTHER" id="PTHR10472">
    <property type="entry name" value="D-TYROSYL-TRNA TYR DEACYLASE"/>
    <property type="match status" value="1"/>
</dbReference>
<dbReference type="Pfam" id="PF02580">
    <property type="entry name" value="Tyr_Deacylase"/>
    <property type="match status" value="1"/>
</dbReference>
<dbReference type="SUPFAM" id="SSF69500">
    <property type="entry name" value="DTD-like"/>
    <property type="match status" value="1"/>
</dbReference>
<accession>C5CCH1</accession>
<sequence>MRAVCQRAQSASVTVDGKVVGSFEGEGLVILLGVSVTDTEAEAVQVARKVAGLRMLDGERSLTDAGAPALVVSQFTLYGDVRKGRRPSWTRAAKGDQAEPLYERFTAELEAAGVRVERGVFGAMMDVSLTNSGPFTLIVDSDELAGPRRG</sequence>
<organism>
    <name type="scientific">Micrococcus luteus (strain ATCC 4698 / DSM 20030 / JCM 1464 / CCM 169 / CCUG 5858 / IAM 1056 / NBRC 3333 / NCIMB 9278 / NCTC 2665 / VKM Ac-2230)</name>
    <name type="common">Micrococcus lysodeikticus</name>
    <dbReference type="NCBI Taxonomy" id="465515"/>
    <lineage>
        <taxon>Bacteria</taxon>
        <taxon>Bacillati</taxon>
        <taxon>Actinomycetota</taxon>
        <taxon>Actinomycetes</taxon>
        <taxon>Micrococcales</taxon>
        <taxon>Micrococcaceae</taxon>
        <taxon>Micrococcus</taxon>
    </lineage>
</organism>
<protein>
    <recommendedName>
        <fullName evidence="1">D-aminoacyl-tRNA deacylase</fullName>
        <shortName evidence="1">DTD</shortName>
        <ecNumber evidence="1">3.1.1.96</ecNumber>
    </recommendedName>
    <alternativeName>
        <fullName evidence="1">Gly-tRNA(Ala) deacylase</fullName>
    </alternativeName>
</protein>
<proteinExistence type="inferred from homology"/>